<organism>
    <name type="scientific">Sus scrofa</name>
    <name type="common">Pig</name>
    <dbReference type="NCBI Taxonomy" id="9823"/>
    <lineage>
        <taxon>Eukaryota</taxon>
        <taxon>Metazoa</taxon>
        <taxon>Chordata</taxon>
        <taxon>Craniata</taxon>
        <taxon>Vertebrata</taxon>
        <taxon>Euteleostomi</taxon>
        <taxon>Mammalia</taxon>
        <taxon>Eutheria</taxon>
        <taxon>Laurasiatheria</taxon>
        <taxon>Artiodactyla</taxon>
        <taxon>Suina</taxon>
        <taxon>Suidae</taxon>
        <taxon>Sus</taxon>
    </lineage>
</organism>
<keyword id="KW-0007">Acetylation</keyword>
<keyword id="KW-0067">ATP-binding</keyword>
<keyword id="KW-1003">Cell membrane</keyword>
<keyword id="KW-0966">Cell projection</keyword>
<keyword id="KW-0168">Coated pit</keyword>
<keyword id="KW-0254">Endocytosis</keyword>
<keyword id="KW-0418">Kinase</keyword>
<keyword id="KW-0472">Membrane</keyword>
<keyword id="KW-0488">Methylation</keyword>
<keyword id="KW-0547">Nucleotide-binding</keyword>
<keyword id="KW-0597">Phosphoprotein</keyword>
<keyword id="KW-1185">Reference proteome</keyword>
<keyword id="KW-0723">Serine/threonine-protein kinase</keyword>
<keyword id="KW-0770">Synapse</keyword>
<keyword id="KW-0808">Transferase</keyword>
<accession>F1SPM8</accession>
<name>AAK1_PIG</name>
<proteinExistence type="evidence at transcript level"/>
<evidence type="ECO:0000250" key="1">
    <source>
        <dbReference type="UniProtKB" id="F1MH24"/>
    </source>
</evidence>
<evidence type="ECO:0000250" key="2">
    <source>
        <dbReference type="UniProtKB" id="P0C1X8"/>
    </source>
</evidence>
<evidence type="ECO:0000250" key="3">
    <source>
        <dbReference type="UniProtKB" id="Q2M2I8"/>
    </source>
</evidence>
<evidence type="ECO:0000250" key="4">
    <source>
        <dbReference type="UniProtKB" id="Q3UHJ0"/>
    </source>
</evidence>
<evidence type="ECO:0000255" key="5">
    <source>
        <dbReference type="PROSITE-ProRule" id="PRU00159"/>
    </source>
</evidence>
<evidence type="ECO:0000255" key="6">
    <source>
        <dbReference type="PROSITE-ProRule" id="PRU10027"/>
    </source>
</evidence>
<evidence type="ECO:0000256" key="7">
    <source>
        <dbReference type="SAM" id="MobiDB-lite"/>
    </source>
</evidence>
<evidence type="ECO:0000269" key="8">
    <source>
    </source>
</evidence>
<evidence type="ECO:0000303" key="9">
    <source>
    </source>
</evidence>
<evidence type="ECO:0000305" key="10"/>
<gene>
    <name type="primary">AAK1</name>
</gene>
<feature type="chain" id="PRO_0000413362" description="AP2-associated protein kinase 1">
    <location>
        <begin position="1"/>
        <end position="968"/>
    </location>
</feature>
<feature type="domain" description="Protein kinase" evidence="5">
    <location>
        <begin position="46"/>
        <end position="315"/>
    </location>
</feature>
<feature type="region of interest" description="Disordered" evidence="7">
    <location>
        <begin position="1"/>
        <end position="25"/>
    </location>
</feature>
<feature type="region of interest" description="Disordered" evidence="7">
    <location>
        <begin position="327"/>
        <end position="485"/>
    </location>
</feature>
<feature type="region of interest" description="Disordered" evidence="7">
    <location>
        <begin position="578"/>
        <end position="640"/>
    </location>
</feature>
<feature type="region of interest" description="Disordered" evidence="7">
    <location>
        <begin position="671"/>
        <end position="708"/>
    </location>
</feature>
<feature type="region of interest" description="Clathrin-binding domain (CBD)" evidence="3">
    <location>
        <begin position="830"/>
        <end position="967"/>
    </location>
</feature>
<feature type="region of interest" description="Disordered" evidence="7">
    <location>
        <begin position="843"/>
        <end position="862"/>
    </location>
</feature>
<feature type="region of interest" description="Disordered" evidence="7">
    <location>
        <begin position="929"/>
        <end position="952"/>
    </location>
</feature>
<feature type="compositionally biased region" description="Basic and acidic residues" evidence="7">
    <location>
        <begin position="1"/>
        <end position="11"/>
    </location>
</feature>
<feature type="compositionally biased region" description="Gly residues" evidence="7">
    <location>
        <begin position="12"/>
        <end position="25"/>
    </location>
</feature>
<feature type="compositionally biased region" description="Pro residues" evidence="7">
    <location>
        <begin position="437"/>
        <end position="448"/>
    </location>
</feature>
<feature type="compositionally biased region" description="Low complexity" evidence="7">
    <location>
        <begin position="449"/>
        <end position="472"/>
    </location>
</feature>
<feature type="compositionally biased region" description="Low complexity" evidence="7">
    <location>
        <begin position="578"/>
        <end position="589"/>
    </location>
</feature>
<feature type="compositionally biased region" description="Polar residues" evidence="7">
    <location>
        <begin position="679"/>
        <end position="703"/>
    </location>
</feature>
<feature type="compositionally biased region" description="Polar residues" evidence="7">
    <location>
        <begin position="851"/>
        <end position="862"/>
    </location>
</feature>
<feature type="compositionally biased region" description="Low complexity" evidence="7">
    <location>
        <begin position="938"/>
        <end position="951"/>
    </location>
</feature>
<feature type="active site" description="Proton acceptor" evidence="5 6">
    <location>
        <position position="176"/>
    </location>
</feature>
<feature type="binding site" evidence="5">
    <location>
        <begin position="52"/>
        <end position="60"/>
    </location>
    <ligand>
        <name>ATP</name>
        <dbReference type="ChEBI" id="CHEBI:30616"/>
    </ligand>
</feature>
<feature type="binding site" evidence="5">
    <location>
        <position position="74"/>
    </location>
    <ligand>
        <name>ATP</name>
        <dbReference type="ChEBI" id="CHEBI:30616"/>
    </ligand>
</feature>
<feature type="modified residue" description="N-acetylmethionine" evidence="3">
    <location>
        <position position="1"/>
    </location>
</feature>
<feature type="modified residue" description="Phosphoserine" evidence="3">
    <location>
        <position position="14"/>
    </location>
</feature>
<feature type="modified residue" description="Phosphotyrosine" evidence="3">
    <location>
        <position position="234"/>
    </location>
</feature>
<feature type="modified residue" description="Phosphoserine" evidence="3">
    <location>
        <position position="235"/>
    </location>
</feature>
<feature type="modified residue" description="Phosphothreonine" evidence="3">
    <location>
        <position position="354"/>
    </location>
</feature>
<feature type="modified residue" description="Phosphothreonine" evidence="3">
    <location>
        <position position="389"/>
    </location>
</feature>
<feature type="modified residue" description="Omega-N-methylarginine" evidence="4">
    <location>
        <position position="391"/>
    </location>
</feature>
<feature type="modified residue" description="Phosphothreonine" evidence="3">
    <location>
        <position position="613"/>
    </location>
</feature>
<feature type="modified residue" description="Phosphoserine" evidence="2">
    <location>
        <position position="625"/>
    </location>
</feature>
<feature type="modified residue" description="Phosphothreonine" evidence="3">
    <location>
        <position position="627"/>
    </location>
</feature>
<feature type="modified residue" description="Phosphoserine" evidence="3">
    <location>
        <position position="630"/>
    </location>
</feature>
<feature type="modified residue" description="Phosphoserine" evidence="3">
    <location>
        <position position="631"/>
    </location>
</feature>
<feature type="modified residue" description="Phosphoserine" evidence="3">
    <location>
        <position position="644"/>
    </location>
</feature>
<feature type="modified residue" description="Phosphoserine" evidence="3">
    <location>
        <position position="657"/>
    </location>
</feature>
<feature type="modified residue" description="Phosphothreonine" evidence="3">
    <location>
        <position position="660"/>
    </location>
</feature>
<feature type="modified residue" description="Phosphotyrosine" evidence="3">
    <location>
        <position position="694"/>
    </location>
</feature>
<feature type="modified residue" description="Phosphoserine" evidence="3">
    <location>
        <position position="738"/>
    </location>
</feature>
<feature type="modified residue" description="Phosphoserine" evidence="4">
    <location>
        <position position="853"/>
    </location>
</feature>
<feature type="modified residue" description="Phosphoserine" evidence="4">
    <location>
        <position position="944"/>
    </location>
</feature>
<feature type="modified residue" description="Phosphoserine" evidence="4">
    <location>
        <position position="945"/>
    </location>
</feature>
<comment type="function">
    <text evidence="3 8">Regulates clathrin-mediated endocytosis by phosphorylating the AP2M1/mu2 subunit of the adaptor protein complex 2 (AP-2) which ensures high affinity binding of AP-2 to cargo membrane proteins during the initial stages of endocytosis (PubMed:11877457). Preferentially, may phosphorylate substrates on threonine residues (By similarity). Regulates phosphorylation of other AP-2 subunits as well as AP-2 localization and AP-2-mediated internalization of ligand complexes (By similarity). Phosphorylates NUMB and regulates its cellular localization, promoting NUMB localization to endosomes (By similarity). Binds to and stabilizes the activated form of NOTCH1, increases its localization in endosomes and regulates its transcriptional activity (By similarity).</text>
</comment>
<comment type="catalytic activity">
    <reaction evidence="10">
        <text>L-seryl-[protein] + ATP = O-phospho-L-seryl-[protein] + ADP + H(+)</text>
        <dbReference type="Rhea" id="RHEA:17989"/>
        <dbReference type="Rhea" id="RHEA-COMP:9863"/>
        <dbReference type="Rhea" id="RHEA-COMP:11604"/>
        <dbReference type="ChEBI" id="CHEBI:15378"/>
        <dbReference type="ChEBI" id="CHEBI:29999"/>
        <dbReference type="ChEBI" id="CHEBI:30616"/>
        <dbReference type="ChEBI" id="CHEBI:83421"/>
        <dbReference type="ChEBI" id="CHEBI:456216"/>
        <dbReference type="EC" id="2.7.11.1"/>
    </reaction>
</comment>
<comment type="catalytic activity">
    <reaction evidence="3">
        <text>L-threonyl-[protein] + ATP = O-phospho-L-threonyl-[protein] + ADP + H(+)</text>
        <dbReference type="Rhea" id="RHEA:46608"/>
        <dbReference type="Rhea" id="RHEA-COMP:11060"/>
        <dbReference type="Rhea" id="RHEA-COMP:11605"/>
        <dbReference type="ChEBI" id="CHEBI:15378"/>
        <dbReference type="ChEBI" id="CHEBI:30013"/>
        <dbReference type="ChEBI" id="CHEBI:30616"/>
        <dbReference type="ChEBI" id="CHEBI:61977"/>
        <dbReference type="ChEBI" id="CHEBI:456216"/>
        <dbReference type="EC" id="2.7.11.1"/>
    </reaction>
</comment>
<comment type="activity regulation">
    <text evidence="3">Stimulated by clathrin.</text>
</comment>
<comment type="subunit">
    <text evidence="2 3">Interacts (via CBD domain) with clathrin (By similarity). Interacts with AP-2 complex (By similarity). Interacts with NUMB (By similarity). Interacts with alpha-adaptin (By similarity). Interacts with EPS15 (By similarity). Interacts with membrane-bound activated NOTCH1 but not with the inactive full-length form of NOTCH1 (By similarity). Preferentially interacts with monoubiquitinated activated NOTCH1 compared to the non-ubiquitinated form (By similarity).</text>
</comment>
<comment type="subcellular location">
    <subcellularLocation>
        <location evidence="1">Cell membrane</location>
        <topology evidence="1">Peripheral membrane protein</topology>
    </subcellularLocation>
    <subcellularLocation>
        <location evidence="2">Membrane</location>
        <location evidence="2">Clathrin-coated pit</location>
    </subcellularLocation>
    <subcellularLocation>
        <location evidence="2">Presynapse</location>
    </subcellularLocation>
    <text evidence="2">Active when found in clathrin-coated pits at the plasma membrane. In neuronal cells, enriched at presynaptic terminals. In non-neuronal cells, enriched at leading edge of migrating cells.</text>
</comment>
<comment type="PTM">
    <text evidence="3">Autophosphorylated.</text>
</comment>
<comment type="similarity">
    <text evidence="5">Belongs to the protein kinase superfamily. Ser/Thr protein kinase family.</text>
</comment>
<reference key="1">
    <citation type="submission" date="2009-11" db="EMBL/GenBank/DDBJ databases">
        <authorList>
            <consortium name="Porcine genome sequencing project"/>
        </authorList>
    </citation>
    <scope>NUCLEOTIDE SEQUENCE [LARGE SCALE GENOMIC DNA]</scope>
</reference>
<reference key="2">
    <citation type="submission" date="2010-02" db="EMBL/GenBank/DDBJ databases">
        <title>Porcine ESTs using full-length-enriched cDNA libraries.</title>
        <authorList>
            <person name="Uenishi H."/>
            <person name="Morozumi T."/>
            <person name="Toki D."/>
            <person name="Eguchi-Ogawa T."/>
            <person name="Tanaka-Matsuda M."/>
        </authorList>
    </citation>
    <scope>NUCLEOTIDE SEQUENCE [LARGE SCALE MRNA] OF 1-54</scope>
</reference>
<reference evidence="10" key="3">
    <citation type="journal article" date="2002" name="J. Cell Biol.">
        <title>Phosphorylation of the AP2 mu subunit by AAK1 mediates high affinity binding to membrane protein sorting signals.</title>
        <authorList>
            <person name="Ricotta D."/>
            <person name="Conner S.D."/>
            <person name="Schmid S.L."/>
            <person name="von Figura K."/>
            <person name="Honing S."/>
        </authorList>
    </citation>
    <scope>FUNCTION</scope>
</reference>
<protein>
    <recommendedName>
        <fullName evidence="9">AP2-associated protein kinase 1</fullName>
        <ecNumber evidence="3">2.7.11.1</ecNumber>
    </recommendedName>
    <alternativeName>
        <fullName evidence="9">Adaptor-associated kinase 1</fullName>
    </alternativeName>
</protein>
<sequence>MKKFFDSRREQGGSGLGSGSSGGGGSTSGLGSGYIGRVFGIGRQQVTVDEVLAEGGFAIVFLVRTSNGMKCALKRMFVNNEHDLQVCKREIQIMRDLSGHKNIVGYIDSSINNVSSGDVWEVLILMDFCRGGQVVNLMNQRLQTGFTESEVLQIFCDTCEAVARLHQCKTPIIHRDLKVENILLHDRGHYVLCDFGSATNKFQNPQTEGVNAVEDEIKKYTTLSYRAPEMVNLYSGKIITTKADIWALGCLLYKLCYFTLPFGESQVAICDGNFTIPDNSRYSQDMHCLIRYMLEPDPDKRPDIYQVSFFSFKLLKKECPVPNVQNSPIPAKLPEPVKASEAAAKKTQPKARLTDPIPTTETSIAPRQRPKAGQTQPNPGILPIQPALTPRKRAMVQPPPQVAGSSNQPGLLASVPQPKTQAPPSQPLPQSQAKQPQAPPAPQQPPSAPAQGLPAQAQATPQHQQQLFLKQQPQPPQPQPQAQAPPVKSLKFYPFYPMCKGRQTVSSQFQAVHPAAQQPAIAQFPAVSQGSSQQQLIQNFYQQQQQQQQQQQLATTLHQQQLLTQQAALQQKTTVAAIQPPQAQPATASQPPPAQEPAQIQAPVRQQPKVQTTPPPAIQGQKLGSLTPPSSPKAQRAGHRRILSDVTHSAVFGVPASKSTQLLQAAAAEASLNKSKSATTTPSGSPRASQQNVYNPSEGSTWNPFDDDNFSKLTAEELLNKDFAKLGEGKHPEKLGGSAESLIPGFQPTQGDAFAASSFAAGTAEKRKGGQAVDSSLPLLSVSDPFIPLQVPDAPEKLIEGLKSPDTSLLLPDLLPMTDPFGSTSDAVIEKADVAVESLIPGLEPPVPQRLPSQTESVASNRTDSLTGEDALIDCSLLSNPTTDLLEEFAPIAISAPAHKAAEDSNLISGFDVPEGSDKVAEDEFDPIPVLITKNPQGGHSRNSSGSSESSLPNLARSLLLVDQLIDL</sequence>
<dbReference type="EC" id="2.7.11.1" evidence="3"/>
<dbReference type="EMBL" id="CU467585">
    <property type="status" value="NOT_ANNOTATED_CDS"/>
    <property type="molecule type" value="Genomic_DNA"/>
</dbReference>
<dbReference type="EMBL" id="FS674854">
    <property type="status" value="NOT_ANNOTATED_CDS"/>
    <property type="molecule type" value="mRNA"/>
</dbReference>
<dbReference type="SMR" id="F1SPM8"/>
<dbReference type="FunCoup" id="F1SPM8">
    <property type="interactions" value="1206"/>
</dbReference>
<dbReference type="STRING" id="9823.ENSSSCP00000064052"/>
<dbReference type="PaxDb" id="9823-ENSSSCP00000008900"/>
<dbReference type="PeptideAtlas" id="F1SPM8"/>
<dbReference type="eggNOG" id="KOG1989">
    <property type="taxonomic scope" value="Eukaryota"/>
</dbReference>
<dbReference type="InParanoid" id="F1SPM8"/>
<dbReference type="OMA" id="VSQFPVM"/>
<dbReference type="Proteomes" id="UP000008227">
    <property type="component" value="Unplaced"/>
</dbReference>
<dbReference type="Proteomes" id="UP000314985">
    <property type="component" value="Unplaced"/>
</dbReference>
<dbReference type="Proteomes" id="UP000694570">
    <property type="component" value="Unplaced"/>
</dbReference>
<dbReference type="Proteomes" id="UP000694571">
    <property type="component" value="Unplaced"/>
</dbReference>
<dbReference type="Proteomes" id="UP000694720">
    <property type="component" value="Unplaced"/>
</dbReference>
<dbReference type="Proteomes" id="UP000694722">
    <property type="component" value="Unplaced"/>
</dbReference>
<dbReference type="Proteomes" id="UP000694723">
    <property type="component" value="Unplaced"/>
</dbReference>
<dbReference type="Proteomes" id="UP000694724">
    <property type="component" value="Unplaced"/>
</dbReference>
<dbReference type="Proteomes" id="UP000694725">
    <property type="component" value="Unplaced"/>
</dbReference>
<dbReference type="Proteomes" id="UP000694726">
    <property type="component" value="Unplaced"/>
</dbReference>
<dbReference type="Proteomes" id="UP000694727">
    <property type="component" value="Unplaced"/>
</dbReference>
<dbReference type="Proteomes" id="UP000694728">
    <property type="component" value="Unplaced"/>
</dbReference>
<dbReference type="GO" id="GO:0031252">
    <property type="term" value="C:cell leading edge"/>
    <property type="evidence" value="ECO:0000250"/>
    <property type="project" value="UniProtKB"/>
</dbReference>
<dbReference type="GO" id="GO:0005905">
    <property type="term" value="C:clathrin-coated pit"/>
    <property type="evidence" value="ECO:0000250"/>
    <property type="project" value="UniProtKB"/>
</dbReference>
<dbReference type="GO" id="GO:0030136">
    <property type="term" value="C:clathrin-coated vesicle"/>
    <property type="evidence" value="ECO:0000314"/>
    <property type="project" value="UniProtKB"/>
</dbReference>
<dbReference type="GO" id="GO:0005886">
    <property type="term" value="C:plasma membrane"/>
    <property type="evidence" value="ECO:0007669"/>
    <property type="project" value="UniProtKB-SubCell"/>
</dbReference>
<dbReference type="GO" id="GO:0098793">
    <property type="term" value="C:presynapse"/>
    <property type="evidence" value="ECO:0000318"/>
    <property type="project" value="GO_Central"/>
</dbReference>
<dbReference type="GO" id="GO:0043195">
    <property type="term" value="C:terminal bouton"/>
    <property type="evidence" value="ECO:0000250"/>
    <property type="project" value="UniProtKB"/>
</dbReference>
<dbReference type="GO" id="GO:0035612">
    <property type="term" value="F:AP-2 adaptor complex binding"/>
    <property type="evidence" value="ECO:0000250"/>
    <property type="project" value="UniProtKB"/>
</dbReference>
<dbReference type="GO" id="GO:0005524">
    <property type="term" value="F:ATP binding"/>
    <property type="evidence" value="ECO:0007669"/>
    <property type="project" value="UniProtKB-KW"/>
</dbReference>
<dbReference type="GO" id="GO:0005112">
    <property type="term" value="F:Notch binding"/>
    <property type="evidence" value="ECO:0000250"/>
    <property type="project" value="UniProtKB"/>
</dbReference>
<dbReference type="GO" id="GO:0106310">
    <property type="term" value="F:protein serine kinase activity"/>
    <property type="evidence" value="ECO:0007669"/>
    <property type="project" value="RHEA"/>
</dbReference>
<dbReference type="GO" id="GO:0004674">
    <property type="term" value="F:protein serine/threonine kinase activity"/>
    <property type="evidence" value="ECO:0000250"/>
    <property type="project" value="UniProtKB"/>
</dbReference>
<dbReference type="GO" id="GO:0006897">
    <property type="term" value="P:endocytosis"/>
    <property type="evidence" value="ECO:0007669"/>
    <property type="project" value="UniProtKB-KW"/>
</dbReference>
<dbReference type="GO" id="GO:0045747">
    <property type="term" value="P:positive regulation of Notch signaling pathway"/>
    <property type="evidence" value="ECO:0000250"/>
    <property type="project" value="UniProtKB"/>
</dbReference>
<dbReference type="GO" id="GO:0006468">
    <property type="term" value="P:protein phosphorylation"/>
    <property type="evidence" value="ECO:0000314"/>
    <property type="project" value="UniProtKB"/>
</dbReference>
<dbReference type="GO" id="GO:0050821">
    <property type="term" value="P:protein stabilization"/>
    <property type="evidence" value="ECO:0000250"/>
    <property type="project" value="UniProtKB"/>
</dbReference>
<dbReference type="GO" id="GO:2000369">
    <property type="term" value="P:regulation of clathrin-dependent endocytosis"/>
    <property type="evidence" value="ECO:0000314"/>
    <property type="project" value="UniProtKB"/>
</dbReference>
<dbReference type="GO" id="GO:0032880">
    <property type="term" value="P:regulation of protein localization"/>
    <property type="evidence" value="ECO:0000250"/>
    <property type="project" value="UniProtKB"/>
</dbReference>
<dbReference type="CDD" id="cd14037">
    <property type="entry name" value="STKc_NAK_like"/>
    <property type="match status" value="1"/>
</dbReference>
<dbReference type="FunFam" id="1.10.510.10:FF:000072">
    <property type="entry name" value="AP2 associated kinase 1"/>
    <property type="match status" value="1"/>
</dbReference>
<dbReference type="Gene3D" id="1.10.510.10">
    <property type="entry name" value="Transferase(Phosphotransferase) domain 1"/>
    <property type="match status" value="1"/>
</dbReference>
<dbReference type="InterPro" id="IPR051744">
    <property type="entry name" value="AP2_assoc_SerThr_kinase"/>
</dbReference>
<dbReference type="InterPro" id="IPR011009">
    <property type="entry name" value="Kinase-like_dom_sf"/>
</dbReference>
<dbReference type="InterPro" id="IPR000719">
    <property type="entry name" value="Prot_kinase_dom"/>
</dbReference>
<dbReference type="InterPro" id="IPR008271">
    <property type="entry name" value="Ser/Thr_kinase_AS"/>
</dbReference>
<dbReference type="PANTHER" id="PTHR47907:SF3">
    <property type="entry name" value="AP2-ASSOCIATED PROTEIN KINASE 1"/>
    <property type="match status" value="1"/>
</dbReference>
<dbReference type="PANTHER" id="PTHR47907">
    <property type="entry name" value="PROTEIN KINASE DOMAIN-CONTAINING PROTEIN"/>
    <property type="match status" value="1"/>
</dbReference>
<dbReference type="Pfam" id="PF00069">
    <property type="entry name" value="Pkinase"/>
    <property type="match status" value="1"/>
</dbReference>
<dbReference type="SMART" id="SM00220">
    <property type="entry name" value="S_TKc"/>
    <property type="match status" value="1"/>
</dbReference>
<dbReference type="SUPFAM" id="SSF56112">
    <property type="entry name" value="Protein kinase-like (PK-like)"/>
    <property type="match status" value="1"/>
</dbReference>
<dbReference type="PROSITE" id="PS50011">
    <property type="entry name" value="PROTEIN_KINASE_DOM"/>
    <property type="match status" value="1"/>
</dbReference>
<dbReference type="PROSITE" id="PS00108">
    <property type="entry name" value="PROTEIN_KINASE_ST"/>
    <property type="match status" value="1"/>
</dbReference>